<organism>
    <name type="scientific">Escherichia coli O157:H7</name>
    <dbReference type="NCBI Taxonomy" id="83334"/>
    <lineage>
        <taxon>Bacteria</taxon>
        <taxon>Pseudomonadati</taxon>
        <taxon>Pseudomonadota</taxon>
        <taxon>Gammaproteobacteria</taxon>
        <taxon>Enterobacterales</taxon>
        <taxon>Enterobacteriaceae</taxon>
        <taxon>Escherichia</taxon>
    </lineage>
</organism>
<evidence type="ECO:0000250" key="1">
    <source>
        <dbReference type="UniProtKB" id="P0AE52"/>
    </source>
</evidence>
<evidence type="ECO:0000255" key="2">
    <source>
        <dbReference type="PROSITE-ProRule" id="PRU00691"/>
    </source>
</evidence>
<evidence type="ECO:0000305" key="3"/>
<feature type="chain" id="PRO_0000135135" description="Putative peroxiredoxin bcp">
    <location>
        <begin position="1"/>
        <end position="156"/>
    </location>
</feature>
<feature type="domain" description="Thioredoxin" evidence="2">
    <location>
        <begin position="4"/>
        <end position="156"/>
    </location>
</feature>
<feature type="active site" description="Cysteine sulfenic acid (-SOH) intermediate" evidence="1">
    <location>
        <position position="46"/>
    </location>
</feature>
<feature type="disulfide bond" description="Redox-active" evidence="1">
    <location>
        <begin position="46"/>
        <end position="51"/>
    </location>
</feature>
<accession>P0AE54</accession>
<accession>P23480</accession>
<proteinExistence type="inferred from homology"/>
<sequence>MNPLKAGDIAPKFSLPDQDGEQVNLTDFQGQRVLVYFYPKAMTPGCTVQACGLRDNMDELKKAGVDVLGISTDKPEKLSRFAEKELLNFTLLSDEDHQVCEQFGVWGEKSFMGKTYDGIHRISFLIDADGKIEHVFDDFKTSNHHDVVLNWLKEHA</sequence>
<comment type="function">
    <text evidence="1">Thiol-specific peroxidase that catalyzes the reduction of hydrogen peroxide and organic hydroperoxides to water and alcohols, respectively. Plays a role in cell protection against oxidative stress by detoxifying peroxides and as sensor of hydrogen peroxide-mediated signaling events.</text>
</comment>
<comment type="catalytic activity">
    <reaction evidence="1">
        <text>a hydroperoxide + [thioredoxin]-dithiol = an alcohol + [thioredoxin]-disulfide + H2O</text>
        <dbReference type="Rhea" id="RHEA:62620"/>
        <dbReference type="Rhea" id="RHEA-COMP:10698"/>
        <dbReference type="Rhea" id="RHEA-COMP:10700"/>
        <dbReference type="ChEBI" id="CHEBI:15377"/>
        <dbReference type="ChEBI" id="CHEBI:29950"/>
        <dbReference type="ChEBI" id="CHEBI:30879"/>
        <dbReference type="ChEBI" id="CHEBI:35924"/>
        <dbReference type="ChEBI" id="CHEBI:50058"/>
        <dbReference type="EC" id="1.11.1.24"/>
    </reaction>
</comment>
<comment type="subunit">
    <text evidence="1">Monomer.</text>
</comment>
<comment type="miscellaneous">
    <text evidence="1">The active site is a conserved redox-active cysteine residue, the peroxidatic cysteine (C(P)), which makes the nucleophilic attack on the peroxide substrate. The peroxide oxidizes the C(P)-SH to cysteine sulfenic acid (C(P)-SOH), which then reacts with another cysteine residue, the resolving cysteine (C(R)), to form a disulfide bridge. The disulfide is subsequently reduced by an appropriate electron donor to complete the catalytic cycle. In this atypical 2-Cys peroxiredoxin, C(R) is present in the same subunit to form an intramolecular disulfide. The disulfide is subsequently reduced by thioredoxin.</text>
</comment>
<comment type="similarity">
    <text evidence="3">Belongs to the peroxiredoxin family. BCP/PrxQ subfamily.</text>
</comment>
<name>BCP_ECO57</name>
<gene>
    <name type="primary">bcp</name>
    <name type="ordered locus">Z3739</name>
    <name type="ordered locus">ECs3342</name>
</gene>
<reference key="1">
    <citation type="journal article" date="2001" name="Nature">
        <title>Genome sequence of enterohaemorrhagic Escherichia coli O157:H7.</title>
        <authorList>
            <person name="Perna N.T."/>
            <person name="Plunkett G. III"/>
            <person name="Burland V."/>
            <person name="Mau B."/>
            <person name="Glasner J.D."/>
            <person name="Rose D.J."/>
            <person name="Mayhew G.F."/>
            <person name="Evans P.S."/>
            <person name="Gregor J."/>
            <person name="Kirkpatrick H.A."/>
            <person name="Posfai G."/>
            <person name="Hackett J."/>
            <person name="Klink S."/>
            <person name="Boutin A."/>
            <person name="Shao Y."/>
            <person name="Miller L."/>
            <person name="Grotbeck E.J."/>
            <person name="Davis N.W."/>
            <person name="Lim A."/>
            <person name="Dimalanta E.T."/>
            <person name="Potamousis K."/>
            <person name="Apodaca J."/>
            <person name="Anantharaman T.S."/>
            <person name="Lin J."/>
            <person name="Yen G."/>
            <person name="Schwartz D.C."/>
            <person name="Welch R.A."/>
            <person name="Blattner F.R."/>
        </authorList>
    </citation>
    <scope>NUCLEOTIDE SEQUENCE [LARGE SCALE GENOMIC DNA]</scope>
    <source>
        <strain>O157:H7 / EDL933 / ATCC 700927 / EHEC</strain>
    </source>
</reference>
<reference key="2">
    <citation type="journal article" date="2001" name="DNA Res.">
        <title>Complete genome sequence of enterohemorrhagic Escherichia coli O157:H7 and genomic comparison with a laboratory strain K-12.</title>
        <authorList>
            <person name="Hayashi T."/>
            <person name="Makino K."/>
            <person name="Ohnishi M."/>
            <person name="Kurokawa K."/>
            <person name="Ishii K."/>
            <person name="Yokoyama K."/>
            <person name="Han C.-G."/>
            <person name="Ohtsubo E."/>
            <person name="Nakayama K."/>
            <person name="Murata T."/>
            <person name="Tanaka M."/>
            <person name="Tobe T."/>
            <person name="Iida T."/>
            <person name="Takami H."/>
            <person name="Honda T."/>
            <person name="Sasakawa C."/>
            <person name="Ogasawara N."/>
            <person name="Yasunaga T."/>
            <person name="Kuhara S."/>
            <person name="Shiba T."/>
            <person name="Hattori M."/>
            <person name="Shinagawa H."/>
        </authorList>
    </citation>
    <scope>NUCLEOTIDE SEQUENCE [LARGE SCALE GENOMIC DNA]</scope>
    <source>
        <strain>O157:H7 / Sakai / RIMD 0509952 / EHEC</strain>
    </source>
</reference>
<protein>
    <recommendedName>
        <fullName>Putative peroxiredoxin bcp</fullName>
        <ecNumber evidence="1">1.11.1.24</ecNumber>
    </recommendedName>
    <alternativeName>
        <fullName>Bacterioferritin comigratory protein</fullName>
    </alternativeName>
    <alternativeName>
        <fullName>Thioredoxin peroxidase</fullName>
    </alternativeName>
    <alternativeName>
        <fullName evidence="3">Thioredoxin-dependent peroxiredoxin Bcp</fullName>
    </alternativeName>
</protein>
<keyword id="KW-0049">Antioxidant</keyword>
<keyword id="KW-1015">Disulfide bond</keyword>
<keyword id="KW-0560">Oxidoreductase</keyword>
<keyword id="KW-0575">Peroxidase</keyword>
<keyword id="KW-0676">Redox-active center</keyword>
<keyword id="KW-1185">Reference proteome</keyword>
<dbReference type="EC" id="1.11.1.24" evidence="1"/>
<dbReference type="EMBL" id="AE005174">
    <property type="protein sequence ID" value="AAG57590.1"/>
    <property type="molecule type" value="Genomic_DNA"/>
</dbReference>
<dbReference type="EMBL" id="BA000007">
    <property type="protein sequence ID" value="BAB36765.1"/>
    <property type="molecule type" value="Genomic_DNA"/>
</dbReference>
<dbReference type="PIR" id="B85891">
    <property type="entry name" value="B85891"/>
</dbReference>
<dbReference type="PIR" id="F91046">
    <property type="entry name" value="F91046"/>
</dbReference>
<dbReference type="RefSeq" id="NP_311369.1">
    <property type="nucleotide sequence ID" value="NC_002695.1"/>
</dbReference>
<dbReference type="RefSeq" id="WP_001068682.1">
    <property type="nucleotide sequence ID" value="NZ_VOAI01000001.1"/>
</dbReference>
<dbReference type="SMR" id="P0AE54"/>
<dbReference type="STRING" id="155864.Z3739"/>
<dbReference type="GeneID" id="915247"/>
<dbReference type="GeneID" id="93774658"/>
<dbReference type="KEGG" id="ece:Z3739"/>
<dbReference type="KEGG" id="ecs:ECs_3342"/>
<dbReference type="PATRIC" id="fig|386585.9.peg.3491"/>
<dbReference type="eggNOG" id="COG1225">
    <property type="taxonomic scope" value="Bacteria"/>
</dbReference>
<dbReference type="HOGENOM" id="CLU_042529_14_1_6"/>
<dbReference type="OMA" id="PKKFMGK"/>
<dbReference type="Proteomes" id="UP000000558">
    <property type="component" value="Chromosome"/>
</dbReference>
<dbReference type="Proteomes" id="UP000002519">
    <property type="component" value="Chromosome"/>
</dbReference>
<dbReference type="GO" id="GO:0005737">
    <property type="term" value="C:cytoplasm"/>
    <property type="evidence" value="ECO:0007669"/>
    <property type="project" value="TreeGrafter"/>
</dbReference>
<dbReference type="GO" id="GO:0008379">
    <property type="term" value="F:thioredoxin peroxidase activity"/>
    <property type="evidence" value="ECO:0007669"/>
    <property type="project" value="TreeGrafter"/>
</dbReference>
<dbReference type="GO" id="GO:0045454">
    <property type="term" value="P:cell redox homeostasis"/>
    <property type="evidence" value="ECO:0007669"/>
    <property type="project" value="TreeGrafter"/>
</dbReference>
<dbReference type="GO" id="GO:0034599">
    <property type="term" value="P:cellular response to oxidative stress"/>
    <property type="evidence" value="ECO:0007669"/>
    <property type="project" value="TreeGrafter"/>
</dbReference>
<dbReference type="CDD" id="cd03017">
    <property type="entry name" value="PRX_BCP"/>
    <property type="match status" value="1"/>
</dbReference>
<dbReference type="FunFam" id="3.40.30.10:FF:000007">
    <property type="entry name" value="Thioredoxin-dependent thiol peroxidase"/>
    <property type="match status" value="1"/>
</dbReference>
<dbReference type="Gene3D" id="3.40.30.10">
    <property type="entry name" value="Glutaredoxin"/>
    <property type="match status" value="1"/>
</dbReference>
<dbReference type="InterPro" id="IPR000866">
    <property type="entry name" value="AhpC/TSA"/>
</dbReference>
<dbReference type="InterPro" id="IPR024706">
    <property type="entry name" value="Peroxiredoxin_AhpC-typ"/>
</dbReference>
<dbReference type="InterPro" id="IPR050924">
    <property type="entry name" value="Peroxiredoxin_BCP/PrxQ"/>
</dbReference>
<dbReference type="InterPro" id="IPR036249">
    <property type="entry name" value="Thioredoxin-like_sf"/>
</dbReference>
<dbReference type="InterPro" id="IPR013766">
    <property type="entry name" value="Thioredoxin_domain"/>
</dbReference>
<dbReference type="NCBIfam" id="NF006960">
    <property type="entry name" value="PRK09437.1"/>
    <property type="match status" value="1"/>
</dbReference>
<dbReference type="PANTHER" id="PTHR42801:SF4">
    <property type="entry name" value="AHPC_TSA FAMILY PROTEIN"/>
    <property type="match status" value="1"/>
</dbReference>
<dbReference type="PANTHER" id="PTHR42801">
    <property type="entry name" value="THIOREDOXIN-DEPENDENT PEROXIDE REDUCTASE"/>
    <property type="match status" value="1"/>
</dbReference>
<dbReference type="Pfam" id="PF00578">
    <property type="entry name" value="AhpC-TSA"/>
    <property type="match status" value="1"/>
</dbReference>
<dbReference type="PIRSF" id="PIRSF000239">
    <property type="entry name" value="AHPC"/>
    <property type="match status" value="1"/>
</dbReference>
<dbReference type="SUPFAM" id="SSF52833">
    <property type="entry name" value="Thioredoxin-like"/>
    <property type="match status" value="1"/>
</dbReference>
<dbReference type="PROSITE" id="PS51352">
    <property type="entry name" value="THIOREDOXIN_2"/>
    <property type="match status" value="1"/>
</dbReference>